<name>VP32_BPAPS</name>
<organism>
    <name type="scientific">Acyrthosiphon pisum secondary endosymbiont phage 1</name>
    <name type="common">Bacteriophage APSE-1</name>
    <dbReference type="NCBI Taxonomy" id="2682836"/>
    <lineage>
        <taxon>Viruses</taxon>
        <taxon>Duplodnaviria</taxon>
        <taxon>Heunggongvirae</taxon>
        <taxon>Uroviricota</taxon>
        <taxon>Caudoviricetes</taxon>
        <taxon>Sendosyvirus</taxon>
        <taxon>Sendosyvirus APSE1</taxon>
    </lineage>
</organism>
<keyword id="KW-1185">Reference proteome</keyword>
<keyword id="KW-1171">Viral genome ejection through host cell envelope</keyword>
<keyword id="KW-1162">Viral penetration into host cytoplasm</keyword>
<keyword id="KW-1160">Virus entry into host cell</keyword>
<evidence type="ECO:0000250" key="1"/>
<evidence type="ECO:0000305" key="2"/>
<comment type="function">
    <text evidence="1">Component of the phage injection machinery. Required for injection of the phage DNA into the host (By similarity).</text>
</comment>
<comment type="similarity">
    <text evidence="2">Belongs to the podoviruses gp7 family.</text>
</comment>
<protein>
    <recommendedName>
        <fullName>Putative DNA transfer protein p32</fullName>
    </recommendedName>
</protein>
<gene>
    <name type="primary">32</name>
</gene>
<accession>Q9T1R6</accession>
<organismHost>
    <name type="scientific">Escherichia coli</name>
    <dbReference type="NCBI Taxonomy" id="562"/>
</organismHost>
<sequence>MGGSSGDNGASEQARASREAIGLQRAQWNQVMQNLAPYMKVGGPALGELQNLTTLDGQGQALNQFYHSQPFNDLANQARYQHLNAAEATGGLGSTATGNQLAAIAPALGQNWLSGQMQNYGNLVGIGMNAASGQASAGQNYANNVGQLLQNMGAANAAAANSPSGFHRALGGGMAGALTGASIGAMKGSIGGPWGAAIGGGLGLLGSLF</sequence>
<proteinExistence type="inferred from homology"/>
<dbReference type="EMBL" id="AF157835">
    <property type="protein sequence ID" value="AAF03975.1"/>
    <property type="molecule type" value="Genomic_DNA"/>
</dbReference>
<dbReference type="RefSeq" id="NP_050993.1">
    <property type="nucleotide sequence ID" value="NC_000935.1"/>
</dbReference>
<dbReference type="SMR" id="Q9T1R6"/>
<dbReference type="KEGG" id="vg:1262326"/>
<dbReference type="Proteomes" id="UP000000853">
    <property type="component" value="Genome"/>
</dbReference>
<dbReference type="GO" id="GO:0046718">
    <property type="term" value="P:symbiont entry into host cell"/>
    <property type="evidence" value="ECO:0007669"/>
    <property type="project" value="UniProtKB-KW"/>
</dbReference>
<feature type="chain" id="PRO_0000077755" description="Putative DNA transfer protein p32">
    <location>
        <begin position="1"/>
        <end position="209"/>
    </location>
</feature>
<reference key="1">
    <citation type="journal article" date="1999" name="Virology">
        <title>Isolation and characterization of APSE-1, a bacteriophage infecting the secondary endosymbiont of acyrthosiphon pisum.</title>
        <authorList>
            <person name="van der Wilk F."/>
            <person name="Dullemans A.M."/>
            <person name="Verbeek M."/>
            <person name="van den Heuvel J.F.J.M."/>
        </authorList>
    </citation>
    <scope>NUCLEOTIDE SEQUENCE [LARGE SCALE GENOMIC DNA]</scope>
</reference>